<keyword id="KW-0030">Aminoacyl-tRNA synthetase</keyword>
<keyword id="KW-0067">ATP-binding</keyword>
<keyword id="KW-0963">Cytoplasm</keyword>
<keyword id="KW-0436">Ligase</keyword>
<keyword id="KW-0460">Magnesium</keyword>
<keyword id="KW-0479">Metal-binding</keyword>
<keyword id="KW-0547">Nucleotide-binding</keyword>
<keyword id="KW-0648">Protein biosynthesis</keyword>
<keyword id="KW-1185">Reference proteome</keyword>
<dbReference type="EC" id="6.1.1.6" evidence="1"/>
<dbReference type="EMBL" id="CP000448">
    <property type="protein sequence ID" value="ABI67471.1"/>
    <property type="molecule type" value="Genomic_DNA"/>
</dbReference>
<dbReference type="RefSeq" id="WP_011639582.1">
    <property type="nucleotide sequence ID" value="NC_008346.1"/>
</dbReference>
<dbReference type="SMR" id="Q0B0N3"/>
<dbReference type="STRING" id="335541.Swol_0116"/>
<dbReference type="KEGG" id="swo:Swol_0116"/>
<dbReference type="eggNOG" id="COG1190">
    <property type="taxonomic scope" value="Bacteria"/>
</dbReference>
<dbReference type="HOGENOM" id="CLU_008255_6_0_9"/>
<dbReference type="OrthoDB" id="9801152at2"/>
<dbReference type="Proteomes" id="UP000001968">
    <property type="component" value="Chromosome"/>
</dbReference>
<dbReference type="GO" id="GO:0005829">
    <property type="term" value="C:cytosol"/>
    <property type="evidence" value="ECO:0007669"/>
    <property type="project" value="TreeGrafter"/>
</dbReference>
<dbReference type="GO" id="GO:0005524">
    <property type="term" value="F:ATP binding"/>
    <property type="evidence" value="ECO:0007669"/>
    <property type="project" value="UniProtKB-UniRule"/>
</dbReference>
<dbReference type="GO" id="GO:0140096">
    <property type="term" value="F:catalytic activity, acting on a protein"/>
    <property type="evidence" value="ECO:0007669"/>
    <property type="project" value="UniProtKB-ARBA"/>
</dbReference>
<dbReference type="GO" id="GO:0004824">
    <property type="term" value="F:lysine-tRNA ligase activity"/>
    <property type="evidence" value="ECO:0007669"/>
    <property type="project" value="UniProtKB-UniRule"/>
</dbReference>
<dbReference type="GO" id="GO:0000287">
    <property type="term" value="F:magnesium ion binding"/>
    <property type="evidence" value="ECO:0007669"/>
    <property type="project" value="UniProtKB-UniRule"/>
</dbReference>
<dbReference type="GO" id="GO:0016740">
    <property type="term" value="F:transferase activity"/>
    <property type="evidence" value="ECO:0007669"/>
    <property type="project" value="UniProtKB-ARBA"/>
</dbReference>
<dbReference type="GO" id="GO:0000049">
    <property type="term" value="F:tRNA binding"/>
    <property type="evidence" value="ECO:0007669"/>
    <property type="project" value="TreeGrafter"/>
</dbReference>
<dbReference type="GO" id="GO:0006430">
    <property type="term" value="P:lysyl-tRNA aminoacylation"/>
    <property type="evidence" value="ECO:0007669"/>
    <property type="project" value="UniProtKB-UniRule"/>
</dbReference>
<dbReference type="CDD" id="cd00775">
    <property type="entry name" value="LysRS_core"/>
    <property type="match status" value="1"/>
</dbReference>
<dbReference type="CDD" id="cd04322">
    <property type="entry name" value="LysRS_N"/>
    <property type="match status" value="1"/>
</dbReference>
<dbReference type="FunFam" id="2.40.50.140:FF:000024">
    <property type="entry name" value="Lysine--tRNA ligase"/>
    <property type="match status" value="1"/>
</dbReference>
<dbReference type="FunFam" id="3.30.930.10:FF:000001">
    <property type="entry name" value="Lysine--tRNA ligase"/>
    <property type="match status" value="1"/>
</dbReference>
<dbReference type="Gene3D" id="3.30.930.10">
    <property type="entry name" value="Bira Bifunctional Protein, Domain 2"/>
    <property type="match status" value="1"/>
</dbReference>
<dbReference type="Gene3D" id="2.40.50.140">
    <property type="entry name" value="Nucleic acid-binding proteins"/>
    <property type="match status" value="1"/>
</dbReference>
<dbReference type="HAMAP" id="MF_00252">
    <property type="entry name" value="Lys_tRNA_synth_class2"/>
    <property type="match status" value="1"/>
</dbReference>
<dbReference type="InterPro" id="IPR004364">
    <property type="entry name" value="Aa-tRNA-synt_II"/>
</dbReference>
<dbReference type="InterPro" id="IPR006195">
    <property type="entry name" value="aa-tRNA-synth_II"/>
</dbReference>
<dbReference type="InterPro" id="IPR045864">
    <property type="entry name" value="aa-tRNA-synth_II/BPL/LPL"/>
</dbReference>
<dbReference type="InterPro" id="IPR002313">
    <property type="entry name" value="Lys-tRNA-ligase_II"/>
</dbReference>
<dbReference type="InterPro" id="IPR034762">
    <property type="entry name" value="Lys-tRNA-ligase_II_bac/euk"/>
</dbReference>
<dbReference type="InterPro" id="IPR044136">
    <property type="entry name" value="Lys-tRNA-ligase_II_N"/>
</dbReference>
<dbReference type="InterPro" id="IPR018149">
    <property type="entry name" value="Lys-tRNA-synth_II_C"/>
</dbReference>
<dbReference type="InterPro" id="IPR012340">
    <property type="entry name" value="NA-bd_OB-fold"/>
</dbReference>
<dbReference type="InterPro" id="IPR004365">
    <property type="entry name" value="NA-bd_OB_tRNA"/>
</dbReference>
<dbReference type="NCBIfam" id="TIGR00499">
    <property type="entry name" value="lysS_bact"/>
    <property type="match status" value="1"/>
</dbReference>
<dbReference type="NCBIfam" id="NF001756">
    <property type="entry name" value="PRK00484.1"/>
    <property type="match status" value="1"/>
</dbReference>
<dbReference type="PANTHER" id="PTHR42918:SF15">
    <property type="entry name" value="LYSINE--TRNA LIGASE, CHLOROPLASTIC_MITOCHONDRIAL"/>
    <property type="match status" value="1"/>
</dbReference>
<dbReference type="PANTHER" id="PTHR42918">
    <property type="entry name" value="LYSYL-TRNA SYNTHETASE"/>
    <property type="match status" value="1"/>
</dbReference>
<dbReference type="Pfam" id="PF00152">
    <property type="entry name" value="tRNA-synt_2"/>
    <property type="match status" value="1"/>
</dbReference>
<dbReference type="Pfam" id="PF01336">
    <property type="entry name" value="tRNA_anti-codon"/>
    <property type="match status" value="1"/>
</dbReference>
<dbReference type="PIRSF" id="PIRSF039101">
    <property type="entry name" value="LysRS2"/>
    <property type="match status" value="1"/>
</dbReference>
<dbReference type="PRINTS" id="PR00982">
    <property type="entry name" value="TRNASYNTHLYS"/>
</dbReference>
<dbReference type="SUPFAM" id="SSF55681">
    <property type="entry name" value="Class II aaRS and biotin synthetases"/>
    <property type="match status" value="1"/>
</dbReference>
<dbReference type="SUPFAM" id="SSF50249">
    <property type="entry name" value="Nucleic acid-binding proteins"/>
    <property type="match status" value="1"/>
</dbReference>
<dbReference type="PROSITE" id="PS50862">
    <property type="entry name" value="AA_TRNA_LIGASE_II"/>
    <property type="match status" value="1"/>
</dbReference>
<evidence type="ECO:0000255" key="1">
    <source>
        <dbReference type="HAMAP-Rule" id="MF_00252"/>
    </source>
</evidence>
<accession>Q0B0N3</accession>
<protein>
    <recommendedName>
        <fullName evidence="1">Lysine--tRNA ligase</fullName>
        <ecNumber evidence="1">6.1.1.6</ecNumber>
    </recommendedName>
    <alternativeName>
        <fullName evidence="1">Lysyl-tRNA synthetase</fullName>
        <shortName evidence="1">LysRS</shortName>
    </alternativeName>
</protein>
<reference key="1">
    <citation type="journal article" date="2010" name="Environ. Microbiol.">
        <title>The genome of Syntrophomonas wolfei: new insights into syntrophic metabolism and biohydrogen production.</title>
        <authorList>
            <person name="Sieber J.R."/>
            <person name="Sims D.R."/>
            <person name="Han C."/>
            <person name="Kim E."/>
            <person name="Lykidis A."/>
            <person name="Lapidus A.L."/>
            <person name="McDonnald E."/>
            <person name="Rohlin L."/>
            <person name="Culley D.E."/>
            <person name="Gunsalus R."/>
            <person name="McInerney M.J."/>
        </authorList>
    </citation>
    <scope>NUCLEOTIDE SEQUENCE [LARGE SCALE GENOMIC DNA]</scope>
    <source>
        <strain>DSM 2245B / Goettingen</strain>
    </source>
</reference>
<sequence>MSESELNISELKKVRLEKLAELKEMGIEPFGRRFERDSMAQNIKEAFSELEGKTIAIAGRIMSKRRHGKAGFANLADLSGSIQLYFRQDDLGPEKYELYKKLDIGDILGIQGEVFRTQKGEISIHVRDLYYLSKSLTPLPEKWHGLKDVELRYRQRYVDLIVNPEVKEVFVKRSRIIKEMRNYLDDRGFLEVETPMMQPIPGGATARPFITHHNALDMELYLRIAPELYLKRLIVGGLEKVYEINRNFRNEGISTRHNPEFTMLEIYQAYGDYEVMMQLCEDLISAVMLKVNGSMQIDFEGEQLDFTPPWRRVTMLDAIKEAAGLDFSLIKSDEDACQAAWQLGLEVKAGASRGELINEIFEQFVEDKLIQPTFVYGHPVEVSPLAKRNLETPEFTDRFELFIMQREIANAFSELNDPIDQKERFIKQVEKRAGGDAEAHMMDEDYINALEYGMPPAGGMGIGIDRLVMLMTGSPSIRDVILFPTLRPRSSEA</sequence>
<feature type="chain" id="PRO_1000204574" description="Lysine--tRNA ligase">
    <location>
        <begin position="1"/>
        <end position="493"/>
    </location>
</feature>
<feature type="binding site" evidence="1">
    <location>
        <position position="400"/>
    </location>
    <ligand>
        <name>Mg(2+)</name>
        <dbReference type="ChEBI" id="CHEBI:18420"/>
        <label>1</label>
    </ligand>
</feature>
<feature type="binding site" evidence="1">
    <location>
        <position position="407"/>
    </location>
    <ligand>
        <name>Mg(2+)</name>
        <dbReference type="ChEBI" id="CHEBI:18420"/>
        <label>1</label>
    </ligand>
</feature>
<feature type="binding site" evidence="1">
    <location>
        <position position="407"/>
    </location>
    <ligand>
        <name>Mg(2+)</name>
        <dbReference type="ChEBI" id="CHEBI:18420"/>
        <label>2</label>
    </ligand>
</feature>
<gene>
    <name evidence="1" type="primary">lysS</name>
    <name type="ordered locus">Swol_0116</name>
</gene>
<comment type="catalytic activity">
    <reaction evidence="1">
        <text>tRNA(Lys) + L-lysine + ATP = L-lysyl-tRNA(Lys) + AMP + diphosphate</text>
        <dbReference type="Rhea" id="RHEA:20792"/>
        <dbReference type="Rhea" id="RHEA-COMP:9696"/>
        <dbReference type="Rhea" id="RHEA-COMP:9697"/>
        <dbReference type="ChEBI" id="CHEBI:30616"/>
        <dbReference type="ChEBI" id="CHEBI:32551"/>
        <dbReference type="ChEBI" id="CHEBI:33019"/>
        <dbReference type="ChEBI" id="CHEBI:78442"/>
        <dbReference type="ChEBI" id="CHEBI:78529"/>
        <dbReference type="ChEBI" id="CHEBI:456215"/>
        <dbReference type="EC" id="6.1.1.6"/>
    </reaction>
</comment>
<comment type="cofactor">
    <cofactor evidence="1">
        <name>Mg(2+)</name>
        <dbReference type="ChEBI" id="CHEBI:18420"/>
    </cofactor>
    <text evidence="1">Binds 3 Mg(2+) ions per subunit.</text>
</comment>
<comment type="subunit">
    <text evidence="1">Homodimer.</text>
</comment>
<comment type="subcellular location">
    <subcellularLocation>
        <location evidence="1">Cytoplasm</location>
    </subcellularLocation>
</comment>
<comment type="similarity">
    <text evidence="1">Belongs to the class-II aminoacyl-tRNA synthetase family.</text>
</comment>
<name>SYK_SYNWW</name>
<organism>
    <name type="scientific">Syntrophomonas wolfei subsp. wolfei (strain DSM 2245B / Goettingen)</name>
    <dbReference type="NCBI Taxonomy" id="335541"/>
    <lineage>
        <taxon>Bacteria</taxon>
        <taxon>Bacillati</taxon>
        <taxon>Bacillota</taxon>
        <taxon>Clostridia</taxon>
        <taxon>Eubacteriales</taxon>
        <taxon>Syntrophomonadaceae</taxon>
        <taxon>Syntrophomonas</taxon>
    </lineage>
</organism>
<proteinExistence type="inferred from homology"/>